<comment type="function">
    <text evidence="1">Catalyzes the transfer of the phosphoribosyl group of 5-phosphorylribose-1-pyrophosphate (PRPP) to anthranilate to yield N-(5'-phosphoribosyl)-anthranilate (PRA).</text>
</comment>
<comment type="catalytic activity">
    <reaction evidence="1">
        <text>N-(5-phospho-beta-D-ribosyl)anthranilate + diphosphate = 5-phospho-alpha-D-ribose 1-diphosphate + anthranilate</text>
        <dbReference type="Rhea" id="RHEA:11768"/>
        <dbReference type="ChEBI" id="CHEBI:16567"/>
        <dbReference type="ChEBI" id="CHEBI:18277"/>
        <dbReference type="ChEBI" id="CHEBI:33019"/>
        <dbReference type="ChEBI" id="CHEBI:58017"/>
        <dbReference type="EC" id="2.4.2.18"/>
    </reaction>
</comment>
<comment type="cofactor">
    <cofactor evidence="1">
        <name>Mg(2+)</name>
        <dbReference type="ChEBI" id="CHEBI:18420"/>
    </cofactor>
    <text evidence="1">Binds 2 magnesium ions per monomer.</text>
</comment>
<comment type="pathway">
    <text evidence="1">Amino-acid biosynthesis; L-tryptophan biosynthesis; L-tryptophan from chorismate: step 2/5.</text>
</comment>
<comment type="subunit">
    <text evidence="1">Homodimer.</text>
</comment>
<comment type="similarity">
    <text evidence="1">Belongs to the anthranilate phosphoribosyltransferase family.</text>
</comment>
<reference key="1">
    <citation type="journal article" date="2001" name="Proc. Natl. Acad. Sci. U.S.A.">
        <title>Complete genomic sequence of Pasteurella multocida Pm70.</title>
        <authorList>
            <person name="May B.J."/>
            <person name="Zhang Q."/>
            <person name="Li L.L."/>
            <person name="Paustian M.L."/>
            <person name="Whittam T.S."/>
            <person name="Kapur V."/>
        </authorList>
    </citation>
    <scope>NUCLEOTIDE SEQUENCE [LARGE SCALE GENOMIC DNA]</scope>
    <source>
        <strain>Pm70</strain>
    </source>
</reference>
<sequence>MQTEQLLHQLFEKKALNQQQTEFLFTAIVRGQLDNSQLSAALIALKLRGETPEEISGAVTALQADAESFPIPDYPFADIVGTGGDGANTINISTASAIVAASYGLKVAKHGNRSVSSQTGASDLLTALGVNVHISAHKARQALDEIGLCFLFAPQYHLGFQHAIPVRQALKTRTIFNILGPLINPAKPKRQLLGVYSSDLIQPYAETVARLGHEHSVVVHGSGLDEIALHGVTEVAEIKAGQIERYTLTPQDFGFQPQPLETLRGGKPSENAQILTALLQGKGKLAHQQAVAMNSAMLMSLFGYPNLKQNAQAIMDIIATGKPFETLQQLTQY</sequence>
<dbReference type="EC" id="2.4.2.18" evidence="1"/>
<dbReference type="EMBL" id="AE004439">
    <property type="protein sequence ID" value="AAK02665.1"/>
    <property type="molecule type" value="Genomic_DNA"/>
</dbReference>
<dbReference type="RefSeq" id="WP_005722087.1">
    <property type="nucleotide sequence ID" value="NC_002663.1"/>
</dbReference>
<dbReference type="SMR" id="P57856"/>
<dbReference type="STRING" id="272843.PM0581"/>
<dbReference type="EnsemblBacteria" id="AAK02665">
    <property type="protein sequence ID" value="AAK02665"/>
    <property type="gene ID" value="PM0581"/>
</dbReference>
<dbReference type="KEGG" id="pmu:PM0581"/>
<dbReference type="HOGENOM" id="CLU_034315_2_1_6"/>
<dbReference type="OrthoDB" id="9806430at2"/>
<dbReference type="UniPathway" id="UPA00035">
    <property type="reaction ID" value="UER00041"/>
</dbReference>
<dbReference type="Proteomes" id="UP000000809">
    <property type="component" value="Chromosome"/>
</dbReference>
<dbReference type="GO" id="GO:0005829">
    <property type="term" value="C:cytosol"/>
    <property type="evidence" value="ECO:0007669"/>
    <property type="project" value="TreeGrafter"/>
</dbReference>
<dbReference type="GO" id="GO:0004048">
    <property type="term" value="F:anthranilate phosphoribosyltransferase activity"/>
    <property type="evidence" value="ECO:0007669"/>
    <property type="project" value="UniProtKB-UniRule"/>
</dbReference>
<dbReference type="GO" id="GO:0000287">
    <property type="term" value="F:magnesium ion binding"/>
    <property type="evidence" value="ECO:0007669"/>
    <property type="project" value="UniProtKB-UniRule"/>
</dbReference>
<dbReference type="GO" id="GO:0000162">
    <property type="term" value="P:L-tryptophan biosynthetic process"/>
    <property type="evidence" value="ECO:0007669"/>
    <property type="project" value="UniProtKB-UniRule"/>
</dbReference>
<dbReference type="FunFam" id="3.40.1030.10:FF:000002">
    <property type="entry name" value="Anthranilate phosphoribosyltransferase"/>
    <property type="match status" value="1"/>
</dbReference>
<dbReference type="Gene3D" id="3.40.1030.10">
    <property type="entry name" value="Nucleoside phosphorylase/phosphoribosyltransferase catalytic domain"/>
    <property type="match status" value="1"/>
</dbReference>
<dbReference type="Gene3D" id="1.20.970.10">
    <property type="entry name" value="Transferase, Pyrimidine Nucleoside Phosphorylase, Chain C"/>
    <property type="match status" value="1"/>
</dbReference>
<dbReference type="HAMAP" id="MF_00211">
    <property type="entry name" value="TrpD"/>
    <property type="match status" value="1"/>
</dbReference>
<dbReference type="InterPro" id="IPR005940">
    <property type="entry name" value="Anthranilate_Pribosyl_Tfrase"/>
</dbReference>
<dbReference type="InterPro" id="IPR000312">
    <property type="entry name" value="Glycosyl_Trfase_fam3"/>
</dbReference>
<dbReference type="InterPro" id="IPR017459">
    <property type="entry name" value="Glycosyl_Trfase_fam3_N_dom"/>
</dbReference>
<dbReference type="InterPro" id="IPR036320">
    <property type="entry name" value="Glycosyl_Trfase_fam3_N_dom_sf"/>
</dbReference>
<dbReference type="InterPro" id="IPR035902">
    <property type="entry name" value="Nuc_phospho_transferase"/>
</dbReference>
<dbReference type="NCBIfam" id="TIGR01245">
    <property type="entry name" value="trpD"/>
    <property type="match status" value="1"/>
</dbReference>
<dbReference type="PANTHER" id="PTHR43285">
    <property type="entry name" value="ANTHRANILATE PHOSPHORIBOSYLTRANSFERASE"/>
    <property type="match status" value="1"/>
</dbReference>
<dbReference type="PANTHER" id="PTHR43285:SF2">
    <property type="entry name" value="ANTHRANILATE PHOSPHORIBOSYLTRANSFERASE"/>
    <property type="match status" value="1"/>
</dbReference>
<dbReference type="Pfam" id="PF02885">
    <property type="entry name" value="Glycos_trans_3N"/>
    <property type="match status" value="1"/>
</dbReference>
<dbReference type="Pfam" id="PF00591">
    <property type="entry name" value="Glycos_transf_3"/>
    <property type="match status" value="1"/>
</dbReference>
<dbReference type="SUPFAM" id="SSF52418">
    <property type="entry name" value="Nucleoside phosphorylase/phosphoribosyltransferase catalytic domain"/>
    <property type="match status" value="1"/>
</dbReference>
<dbReference type="SUPFAM" id="SSF47648">
    <property type="entry name" value="Nucleoside phosphorylase/phosphoribosyltransferase N-terminal domain"/>
    <property type="match status" value="1"/>
</dbReference>
<accession>P57856</accession>
<proteinExistence type="inferred from homology"/>
<gene>
    <name evidence="1" type="primary">trpD</name>
    <name type="ordered locus">PM0581</name>
</gene>
<evidence type="ECO:0000255" key="1">
    <source>
        <dbReference type="HAMAP-Rule" id="MF_00211"/>
    </source>
</evidence>
<feature type="chain" id="PRO_0000154467" description="Anthranilate phosphoribosyltransferase">
    <location>
        <begin position="1"/>
        <end position="333"/>
    </location>
</feature>
<feature type="binding site" evidence="1">
    <location>
        <position position="81"/>
    </location>
    <ligand>
        <name>5-phospho-alpha-D-ribose 1-diphosphate</name>
        <dbReference type="ChEBI" id="CHEBI:58017"/>
    </ligand>
</feature>
<feature type="binding site" evidence="1">
    <location>
        <position position="81"/>
    </location>
    <ligand>
        <name>anthranilate</name>
        <dbReference type="ChEBI" id="CHEBI:16567"/>
        <label>1</label>
    </ligand>
</feature>
<feature type="binding site" evidence="1">
    <location>
        <begin position="84"/>
        <end position="85"/>
    </location>
    <ligand>
        <name>5-phospho-alpha-D-ribose 1-diphosphate</name>
        <dbReference type="ChEBI" id="CHEBI:58017"/>
    </ligand>
</feature>
<feature type="binding site" evidence="1">
    <location>
        <position position="89"/>
    </location>
    <ligand>
        <name>5-phospho-alpha-D-ribose 1-diphosphate</name>
        <dbReference type="ChEBI" id="CHEBI:58017"/>
    </ligand>
</feature>
<feature type="binding site" evidence="1">
    <location>
        <begin position="91"/>
        <end position="94"/>
    </location>
    <ligand>
        <name>5-phospho-alpha-D-ribose 1-diphosphate</name>
        <dbReference type="ChEBI" id="CHEBI:58017"/>
    </ligand>
</feature>
<feature type="binding site" evidence="1">
    <location>
        <position position="93"/>
    </location>
    <ligand>
        <name>Mg(2+)</name>
        <dbReference type="ChEBI" id="CHEBI:18420"/>
        <label>1</label>
    </ligand>
</feature>
<feature type="binding site" evidence="1">
    <location>
        <begin position="109"/>
        <end position="117"/>
    </location>
    <ligand>
        <name>5-phospho-alpha-D-ribose 1-diphosphate</name>
        <dbReference type="ChEBI" id="CHEBI:58017"/>
    </ligand>
</feature>
<feature type="binding site" evidence="1">
    <location>
        <position position="112"/>
    </location>
    <ligand>
        <name>anthranilate</name>
        <dbReference type="ChEBI" id="CHEBI:16567"/>
        <label>1</label>
    </ligand>
</feature>
<feature type="binding site" evidence="1">
    <location>
        <position position="121"/>
    </location>
    <ligand>
        <name>5-phospho-alpha-D-ribose 1-diphosphate</name>
        <dbReference type="ChEBI" id="CHEBI:58017"/>
    </ligand>
</feature>
<feature type="binding site" evidence="1">
    <location>
        <position position="167"/>
    </location>
    <ligand>
        <name>anthranilate</name>
        <dbReference type="ChEBI" id="CHEBI:16567"/>
        <label>2</label>
    </ligand>
</feature>
<feature type="binding site" evidence="1">
    <location>
        <position position="225"/>
    </location>
    <ligand>
        <name>Mg(2+)</name>
        <dbReference type="ChEBI" id="CHEBI:18420"/>
        <label>2</label>
    </ligand>
</feature>
<feature type="binding site" evidence="1">
    <location>
        <position position="226"/>
    </location>
    <ligand>
        <name>Mg(2+)</name>
        <dbReference type="ChEBI" id="CHEBI:18420"/>
        <label>1</label>
    </ligand>
</feature>
<feature type="binding site" evidence="1">
    <location>
        <position position="226"/>
    </location>
    <ligand>
        <name>Mg(2+)</name>
        <dbReference type="ChEBI" id="CHEBI:18420"/>
        <label>2</label>
    </ligand>
</feature>
<keyword id="KW-0028">Amino-acid biosynthesis</keyword>
<keyword id="KW-0057">Aromatic amino acid biosynthesis</keyword>
<keyword id="KW-0328">Glycosyltransferase</keyword>
<keyword id="KW-0460">Magnesium</keyword>
<keyword id="KW-0479">Metal-binding</keyword>
<keyword id="KW-1185">Reference proteome</keyword>
<keyword id="KW-0808">Transferase</keyword>
<keyword id="KW-0822">Tryptophan biosynthesis</keyword>
<protein>
    <recommendedName>
        <fullName evidence="1">Anthranilate phosphoribosyltransferase</fullName>
        <ecNumber evidence="1">2.4.2.18</ecNumber>
    </recommendedName>
</protein>
<name>TRPD_PASMU</name>
<organism>
    <name type="scientific">Pasteurella multocida (strain Pm70)</name>
    <dbReference type="NCBI Taxonomy" id="272843"/>
    <lineage>
        <taxon>Bacteria</taxon>
        <taxon>Pseudomonadati</taxon>
        <taxon>Pseudomonadota</taxon>
        <taxon>Gammaproteobacteria</taxon>
        <taxon>Pasteurellales</taxon>
        <taxon>Pasteurellaceae</taxon>
        <taxon>Pasteurella</taxon>
    </lineage>
</organism>